<dbReference type="EC" id="3.1.26.4" evidence="1"/>
<dbReference type="EMBL" id="CP000926">
    <property type="protein sequence ID" value="ABY97068.1"/>
    <property type="molecule type" value="Genomic_DNA"/>
</dbReference>
<dbReference type="RefSeq" id="WP_012270847.1">
    <property type="nucleotide sequence ID" value="NC_010322.1"/>
</dbReference>
<dbReference type="SMR" id="B0KSB3"/>
<dbReference type="KEGG" id="ppg:PputGB1_1160"/>
<dbReference type="eggNOG" id="COG0164">
    <property type="taxonomic scope" value="Bacteria"/>
</dbReference>
<dbReference type="HOGENOM" id="CLU_036532_3_2_6"/>
<dbReference type="Proteomes" id="UP000002157">
    <property type="component" value="Chromosome"/>
</dbReference>
<dbReference type="GO" id="GO:0005737">
    <property type="term" value="C:cytoplasm"/>
    <property type="evidence" value="ECO:0007669"/>
    <property type="project" value="UniProtKB-SubCell"/>
</dbReference>
<dbReference type="GO" id="GO:0032299">
    <property type="term" value="C:ribonuclease H2 complex"/>
    <property type="evidence" value="ECO:0007669"/>
    <property type="project" value="TreeGrafter"/>
</dbReference>
<dbReference type="GO" id="GO:0030145">
    <property type="term" value="F:manganese ion binding"/>
    <property type="evidence" value="ECO:0007669"/>
    <property type="project" value="UniProtKB-UniRule"/>
</dbReference>
<dbReference type="GO" id="GO:0003723">
    <property type="term" value="F:RNA binding"/>
    <property type="evidence" value="ECO:0007669"/>
    <property type="project" value="InterPro"/>
</dbReference>
<dbReference type="GO" id="GO:0004523">
    <property type="term" value="F:RNA-DNA hybrid ribonuclease activity"/>
    <property type="evidence" value="ECO:0007669"/>
    <property type="project" value="UniProtKB-UniRule"/>
</dbReference>
<dbReference type="GO" id="GO:0043137">
    <property type="term" value="P:DNA replication, removal of RNA primer"/>
    <property type="evidence" value="ECO:0007669"/>
    <property type="project" value="TreeGrafter"/>
</dbReference>
<dbReference type="GO" id="GO:0006298">
    <property type="term" value="P:mismatch repair"/>
    <property type="evidence" value="ECO:0007669"/>
    <property type="project" value="TreeGrafter"/>
</dbReference>
<dbReference type="CDD" id="cd07182">
    <property type="entry name" value="RNase_HII_bacteria_HII_like"/>
    <property type="match status" value="1"/>
</dbReference>
<dbReference type="FunFam" id="3.30.420.10:FF:000006">
    <property type="entry name" value="Ribonuclease HII"/>
    <property type="match status" value="1"/>
</dbReference>
<dbReference type="Gene3D" id="3.30.420.10">
    <property type="entry name" value="Ribonuclease H-like superfamily/Ribonuclease H"/>
    <property type="match status" value="1"/>
</dbReference>
<dbReference type="HAMAP" id="MF_00052_B">
    <property type="entry name" value="RNase_HII_B"/>
    <property type="match status" value="1"/>
</dbReference>
<dbReference type="InterPro" id="IPR022898">
    <property type="entry name" value="RNase_HII"/>
</dbReference>
<dbReference type="InterPro" id="IPR001352">
    <property type="entry name" value="RNase_HII/HIII"/>
</dbReference>
<dbReference type="InterPro" id="IPR024567">
    <property type="entry name" value="RNase_HII/HIII_dom"/>
</dbReference>
<dbReference type="InterPro" id="IPR012337">
    <property type="entry name" value="RNaseH-like_sf"/>
</dbReference>
<dbReference type="InterPro" id="IPR036397">
    <property type="entry name" value="RNaseH_sf"/>
</dbReference>
<dbReference type="NCBIfam" id="NF000595">
    <property type="entry name" value="PRK00015.1-3"/>
    <property type="match status" value="1"/>
</dbReference>
<dbReference type="NCBIfam" id="NF000596">
    <property type="entry name" value="PRK00015.1-4"/>
    <property type="match status" value="1"/>
</dbReference>
<dbReference type="PANTHER" id="PTHR10954">
    <property type="entry name" value="RIBONUCLEASE H2 SUBUNIT A"/>
    <property type="match status" value="1"/>
</dbReference>
<dbReference type="PANTHER" id="PTHR10954:SF18">
    <property type="entry name" value="RIBONUCLEASE HII"/>
    <property type="match status" value="1"/>
</dbReference>
<dbReference type="Pfam" id="PF01351">
    <property type="entry name" value="RNase_HII"/>
    <property type="match status" value="1"/>
</dbReference>
<dbReference type="SUPFAM" id="SSF53098">
    <property type="entry name" value="Ribonuclease H-like"/>
    <property type="match status" value="1"/>
</dbReference>
<dbReference type="PROSITE" id="PS51975">
    <property type="entry name" value="RNASE_H_2"/>
    <property type="match status" value="1"/>
</dbReference>
<organism>
    <name type="scientific">Pseudomonas putida (strain GB-1)</name>
    <dbReference type="NCBI Taxonomy" id="76869"/>
    <lineage>
        <taxon>Bacteria</taxon>
        <taxon>Pseudomonadati</taxon>
        <taxon>Pseudomonadota</taxon>
        <taxon>Gammaproteobacteria</taxon>
        <taxon>Pseudomonadales</taxon>
        <taxon>Pseudomonadaceae</taxon>
        <taxon>Pseudomonas</taxon>
    </lineage>
</organism>
<feature type="chain" id="PRO_1000074928" description="Ribonuclease HII">
    <location>
        <begin position="1"/>
        <end position="207"/>
    </location>
</feature>
<feature type="domain" description="RNase H type-2" evidence="2">
    <location>
        <begin position="12"/>
        <end position="201"/>
    </location>
</feature>
<feature type="binding site" evidence="1">
    <location>
        <position position="18"/>
    </location>
    <ligand>
        <name>a divalent metal cation</name>
        <dbReference type="ChEBI" id="CHEBI:60240"/>
    </ligand>
</feature>
<feature type="binding site" evidence="1">
    <location>
        <position position="19"/>
    </location>
    <ligand>
        <name>a divalent metal cation</name>
        <dbReference type="ChEBI" id="CHEBI:60240"/>
    </ligand>
</feature>
<feature type="binding site" evidence="1">
    <location>
        <position position="110"/>
    </location>
    <ligand>
        <name>a divalent metal cation</name>
        <dbReference type="ChEBI" id="CHEBI:60240"/>
    </ligand>
</feature>
<name>RNH2_PSEPG</name>
<accession>B0KSB3</accession>
<keyword id="KW-0963">Cytoplasm</keyword>
<keyword id="KW-0255">Endonuclease</keyword>
<keyword id="KW-0378">Hydrolase</keyword>
<keyword id="KW-0464">Manganese</keyword>
<keyword id="KW-0479">Metal-binding</keyword>
<keyword id="KW-0540">Nuclease</keyword>
<comment type="function">
    <text evidence="1">Endonuclease that specifically degrades the RNA of RNA-DNA hybrids.</text>
</comment>
<comment type="catalytic activity">
    <reaction evidence="1">
        <text>Endonucleolytic cleavage to 5'-phosphomonoester.</text>
        <dbReference type="EC" id="3.1.26.4"/>
    </reaction>
</comment>
<comment type="cofactor">
    <cofactor evidence="1">
        <name>Mn(2+)</name>
        <dbReference type="ChEBI" id="CHEBI:29035"/>
    </cofactor>
    <cofactor evidence="1">
        <name>Mg(2+)</name>
        <dbReference type="ChEBI" id="CHEBI:18420"/>
    </cofactor>
    <text evidence="1">Manganese or magnesium. Binds 1 divalent metal ion per monomer in the absence of substrate. May bind a second metal ion after substrate binding.</text>
</comment>
<comment type="subcellular location">
    <subcellularLocation>
        <location evidence="1">Cytoplasm</location>
    </subcellularLocation>
</comment>
<comment type="similarity">
    <text evidence="1">Belongs to the RNase HII family.</text>
</comment>
<reference key="1">
    <citation type="submission" date="2008-01" db="EMBL/GenBank/DDBJ databases">
        <title>Complete sequence of Pseudomonas putida GB-1.</title>
        <authorList>
            <consortium name="US DOE Joint Genome Institute"/>
            <person name="Copeland A."/>
            <person name="Lucas S."/>
            <person name="Lapidus A."/>
            <person name="Barry K."/>
            <person name="Glavina del Rio T."/>
            <person name="Dalin E."/>
            <person name="Tice H."/>
            <person name="Pitluck S."/>
            <person name="Bruce D."/>
            <person name="Goodwin L."/>
            <person name="Chertkov O."/>
            <person name="Brettin T."/>
            <person name="Detter J.C."/>
            <person name="Han C."/>
            <person name="Kuske C.R."/>
            <person name="Schmutz J."/>
            <person name="Larimer F."/>
            <person name="Land M."/>
            <person name="Hauser L."/>
            <person name="Kyrpides N."/>
            <person name="Kim E."/>
            <person name="McCarthy J.K."/>
            <person name="Richardson P."/>
        </authorList>
    </citation>
    <scope>NUCLEOTIDE SEQUENCE [LARGE SCALE GENOMIC DNA]</scope>
    <source>
        <strain>GB-1</strain>
    </source>
</reference>
<proteinExistence type="inferred from homology"/>
<evidence type="ECO:0000255" key="1">
    <source>
        <dbReference type="HAMAP-Rule" id="MF_00052"/>
    </source>
</evidence>
<evidence type="ECO:0000255" key="2">
    <source>
        <dbReference type="PROSITE-ProRule" id="PRU01319"/>
    </source>
</evidence>
<sequence>MQIGLDFNLVEDLVAGVDEVGRGPLCGAVVTAAVILDPARPILGLNDSKKLTEAKREALFDEICEKALSFCIARAEVEEIDRLNILQATMLAMQRAVEGLHITPKLALIDGNRCPKLAVPASPVVKGDSQVPAIAAASILAKVTRDREMSAFELIYPGYGIGGHKGYPTPVHLEALARLGPTPIHRRSFAPVRAAWEAREGVTDSLI</sequence>
<protein>
    <recommendedName>
        <fullName evidence="1">Ribonuclease HII</fullName>
        <shortName evidence="1">RNase HII</shortName>
        <ecNumber evidence="1">3.1.26.4</ecNumber>
    </recommendedName>
</protein>
<gene>
    <name evidence="1" type="primary">rnhB</name>
    <name type="ordered locus">PputGB1_1160</name>
</gene>